<comment type="function">
    <text evidence="1">Transfers a succinyl group from succinyl-CoA to L-homoserine, forming succinyl-L-homoserine.</text>
</comment>
<comment type="catalytic activity">
    <reaction evidence="1">
        <text>L-homoserine + succinyl-CoA = O-succinyl-L-homoserine + CoA</text>
        <dbReference type="Rhea" id="RHEA:22008"/>
        <dbReference type="ChEBI" id="CHEBI:57287"/>
        <dbReference type="ChEBI" id="CHEBI:57292"/>
        <dbReference type="ChEBI" id="CHEBI:57476"/>
        <dbReference type="ChEBI" id="CHEBI:57661"/>
        <dbReference type="EC" id="2.3.1.46"/>
    </reaction>
</comment>
<comment type="pathway">
    <text evidence="1">Amino-acid biosynthesis; L-methionine biosynthesis via de novo pathway; O-succinyl-L-homoserine from L-homoserine: step 1/1.</text>
</comment>
<comment type="subunit">
    <text evidence="1">Homodimer.</text>
</comment>
<comment type="subcellular location">
    <subcellularLocation>
        <location evidence="1">Cytoplasm</location>
    </subcellularLocation>
</comment>
<comment type="similarity">
    <text evidence="1">Belongs to the AB hydrolase superfamily. MetX family.</text>
</comment>
<accession>C5BLJ8</accession>
<name>METXS_TERTT</name>
<proteinExistence type="inferred from homology"/>
<sequence>MPDSIPANSVGLVTPQLMQFDEPLALACGRTLDSYQLMVETYGTLNASRTNALLICHALSGHHHAAGYHSMDERKPGWWDAYIGPGKPLDTNKFFIVSLNNIGGCHGSTGPVTPNPSTGQPWGGDFPTLRVRDWVHSQARLADALGIQKWAAVVGGSLGGMQAMRWSLEYPDRVGHCVVIASAMKLSAQNIAFNHAAREAILTDPDFHDGNFLSHSTVPKRGLSTARVIAHLTYLSDDGMGQKFGRELRSGSFEQGTEEPVEFQIESYLRYQADSFSKVFDANTYVLMTRALDYFDLAREYGDDPVEAFKQAQCKYMVISFTSDWRFSPERSREIVNALIRADRDVVYGELESDFGHDAFLIPNQPRYWDLLTSYMSQIEVAD</sequence>
<keyword id="KW-0012">Acyltransferase</keyword>
<keyword id="KW-0028">Amino-acid biosynthesis</keyword>
<keyword id="KW-0963">Cytoplasm</keyword>
<keyword id="KW-0486">Methionine biosynthesis</keyword>
<keyword id="KW-1185">Reference proteome</keyword>
<keyword id="KW-0808">Transferase</keyword>
<organism>
    <name type="scientific">Teredinibacter turnerae (strain ATCC 39867 / T7901)</name>
    <dbReference type="NCBI Taxonomy" id="377629"/>
    <lineage>
        <taxon>Bacteria</taxon>
        <taxon>Pseudomonadati</taxon>
        <taxon>Pseudomonadota</taxon>
        <taxon>Gammaproteobacteria</taxon>
        <taxon>Cellvibrionales</taxon>
        <taxon>Cellvibrionaceae</taxon>
        <taxon>Teredinibacter</taxon>
    </lineage>
</organism>
<dbReference type="EC" id="2.3.1.46" evidence="1"/>
<dbReference type="EMBL" id="CP001614">
    <property type="protein sequence ID" value="ACR11399.1"/>
    <property type="molecule type" value="Genomic_DNA"/>
</dbReference>
<dbReference type="RefSeq" id="WP_015817511.1">
    <property type="nucleotide sequence ID" value="NC_012997.1"/>
</dbReference>
<dbReference type="SMR" id="C5BLJ8"/>
<dbReference type="STRING" id="377629.TERTU_0219"/>
<dbReference type="ESTHER" id="tertt-metx">
    <property type="family name" value="Homoserine_transacetylase"/>
</dbReference>
<dbReference type="KEGG" id="ttu:TERTU_0219"/>
<dbReference type="eggNOG" id="COG2021">
    <property type="taxonomic scope" value="Bacteria"/>
</dbReference>
<dbReference type="HOGENOM" id="CLU_028760_1_2_6"/>
<dbReference type="OrthoDB" id="9800754at2"/>
<dbReference type="UniPathway" id="UPA00051">
    <property type="reaction ID" value="UER00075"/>
</dbReference>
<dbReference type="Proteomes" id="UP000009080">
    <property type="component" value="Chromosome"/>
</dbReference>
<dbReference type="GO" id="GO:0005737">
    <property type="term" value="C:cytoplasm"/>
    <property type="evidence" value="ECO:0007669"/>
    <property type="project" value="UniProtKB-SubCell"/>
</dbReference>
<dbReference type="GO" id="GO:0004414">
    <property type="term" value="F:homoserine O-acetyltransferase activity"/>
    <property type="evidence" value="ECO:0007669"/>
    <property type="project" value="TreeGrafter"/>
</dbReference>
<dbReference type="GO" id="GO:0008899">
    <property type="term" value="F:homoserine O-succinyltransferase activity"/>
    <property type="evidence" value="ECO:0007669"/>
    <property type="project" value="UniProtKB-UniRule"/>
</dbReference>
<dbReference type="GO" id="GO:0009092">
    <property type="term" value="P:homoserine metabolic process"/>
    <property type="evidence" value="ECO:0007669"/>
    <property type="project" value="TreeGrafter"/>
</dbReference>
<dbReference type="GO" id="GO:0009086">
    <property type="term" value="P:methionine biosynthetic process"/>
    <property type="evidence" value="ECO:0007669"/>
    <property type="project" value="UniProtKB-UniRule"/>
</dbReference>
<dbReference type="Gene3D" id="1.10.1740.110">
    <property type="match status" value="1"/>
</dbReference>
<dbReference type="Gene3D" id="3.40.50.1820">
    <property type="entry name" value="alpha/beta hydrolase"/>
    <property type="match status" value="1"/>
</dbReference>
<dbReference type="HAMAP" id="MF_00296">
    <property type="entry name" value="MetX_acyltransf"/>
    <property type="match status" value="1"/>
</dbReference>
<dbReference type="InterPro" id="IPR000073">
    <property type="entry name" value="AB_hydrolase_1"/>
</dbReference>
<dbReference type="InterPro" id="IPR029058">
    <property type="entry name" value="AB_hydrolase_fold"/>
</dbReference>
<dbReference type="InterPro" id="IPR008220">
    <property type="entry name" value="HAT_MetX-like"/>
</dbReference>
<dbReference type="NCBIfam" id="TIGR01392">
    <property type="entry name" value="homoserO_Ac_trn"/>
    <property type="match status" value="1"/>
</dbReference>
<dbReference type="NCBIfam" id="NF001209">
    <property type="entry name" value="PRK00175.1"/>
    <property type="match status" value="1"/>
</dbReference>
<dbReference type="PANTHER" id="PTHR32268">
    <property type="entry name" value="HOMOSERINE O-ACETYLTRANSFERASE"/>
    <property type="match status" value="1"/>
</dbReference>
<dbReference type="PANTHER" id="PTHR32268:SF11">
    <property type="entry name" value="HOMOSERINE O-ACETYLTRANSFERASE"/>
    <property type="match status" value="1"/>
</dbReference>
<dbReference type="Pfam" id="PF00561">
    <property type="entry name" value="Abhydrolase_1"/>
    <property type="match status" value="1"/>
</dbReference>
<dbReference type="PIRSF" id="PIRSF000443">
    <property type="entry name" value="Homoser_Ac_trans"/>
    <property type="match status" value="1"/>
</dbReference>
<dbReference type="SUPFAM" id="SSF53474">
    <property type="entry name" value="alpha/beta-Hydrolases"/>
    <property type="match status" value="1"/>
</dbReference>
<feature type="chain" id="PRO_1000204928" description="Homoserine O-succinyltransferase">
    <location>
        <begin position="1"/>
        <end position="383"/>
    </location>
</feature>
<feature type="domain" description="AB hydrolase-1" evidence="1">
    <location>
        <begin position="51"/>
        <end position="361"/>
    </location>
</feature>
<feature type="active site" description="Nucleophile" evidence="1">
    <location>
        <position position="157"/>
    </location>
</feature>
<feature type="active site" evidence="1">
    <location>
        <position position="324"/>
    </location>
</feature>
<feature type="active site" evidence="1">
    <location>
        <position position="357"/>
    </location>
</feature>
<feature type="binding site" evidence="1">
    <location>
        <position position="227"/>
    </location>
    <ligand>
        <name>substrate</name>
    </ligand>
</feature>
<feature type="binding site" evidence="1">
    <location>
        <position position="358"/>
    </location>
    <ligand>
        <name>substrate</name>
    </ligand>
</feature>
<feature type="site" description="Important for acyl-CoA specificity" evidence="1">
    <location>
        <position position="326"/>
    </location>
</feature>
<evidence type="ECO:0000255" key="1">
    <source>
        <dbReference type="HAMAP-Rule" id="MF_00296"/>
    </source>
</evidence>
<reference key="1">
    <citation type="journal article" date="2009" name="PLoS ONE">
        <title>The complete genome of Teredinibacter turnerae T7901: an intracellular endosymbiont of marine wood-boring bivalves (shipworms).</title>
        <authorList>
            <person name="Yang J.C."/>
            <person name="Madupu R."/>
            <person name="Durkin A.S."/>
            <person name="Ekborg N.A."/>
            <person name="Pedamallu C.S."/>
            <person name="Hostetler J.B."/>
            <person name="Radune D."/>
            <person name="Toms B.S."/>
            <person name="Henrissat B."/>
            <person name="Coutinho P.M."/>
            <person name="Schwarz S."/>
            <person name="Field L."/>
            <person name="Trindade-Silva A.E."/>
            <person name="Soares C.A.G."/>
            <person name="Elshahawi S."/>
            <person name="Hanora A."/>
            <person name="Schmidt E.W."/>
            <person name="Haygood M.G."/>
            <person name="Posfai J."/>
            <person name="Benner J."/>
            <person name="Madinger C."/>
            <person name="Nove J."/>
            <person name="Anton B."/>
            <person name="Chaudhary K."/>
            <person name="Foster J."/>
            <person name="Holman A."/>
            <person name="Kumar S."/>
            <person name="Lessard P.A."/>
            <person name="Luyten Y.A."/>
            <person name="Slatko B."/>
            <person name="Wood N."/>
            <person name="Wu B."/>
            <person name="Teplitski M."/>
            <person name="Mougous J.D."/>
            <person name="Ward N."/>
            <person name="Eisen J.A."/>
            <person name="Badger J.H."/>
            <person name="Distel D.L."/>
        </authorList>
    </citation>
    <scope>NUCLEOTIDE SEQUENCE [LARGE SCALE GENOMIC DNA]</scope>
    <source>
        <strain>ATCC 39867 / T7901</strain>
    </source>
</reference>
<protein>
    <recommendedName>
        <fullName evidence="1">Homoserine O-succinyltransferase</fullName>
        <shortName evidence="1">HST</shortName>
        <ecNumber evidence="1">2.3.1.46</ecNumber>
    </recommendedName>
    <alternativeName>
        <fullName evidence="1">Homoserine transsuccinylase</fullName>
        <shortName evidence="1">HTS</shortName>
    </alternativeName>
</protein>
<gene>
    <name evidence="1" type="primary">metXS</name>
    <name type="ordered locus">TERTU_0219</name>
</gene>